<protein>
    <recommendedName>
        <fullName evidence="1">N-succinylarginine dihydrolase</fullName>
        <ecNumber evidence="1">3.5.3.23</ecNumber>
    </recommendedName>
</protein>
<proteinExistence type="inferred from homology"/>
<sequence length="444" mass="49176">MKHFEANFDGLVGPTHNYAGLSFGNVASLSNAALVSNPKAAAKQGLQKAKALADMGMVQGMLAPQERPDLYTLRRIGFSGSDANVLKQAAKEAPMLLNACCSASSMWTANAATVSPSADTRDGKLHFTPANLVDKLHRSIEPLTTGRILTATFSDPHYFHHHSHLPEHNSFGDEGAANQTRLCNEYGHAGVELFVYGQEATNPNAPKPQKYPARQTLEASMAVARLHQLEEDNCVFIQQNPDVIDQGVFHNDVIAVGNQNVLFYHEQAFLNTQHKIDEIKRKLDTELYFIEVPTAKVAINDAVKSYLFNTQIITLPSGEMAIIAPTDCQENPAVFAYLNELLTLNTPIKQVLYFDVKQSMQNGGGPACLRLRVAMNEMEVAAVNQHTLMNDALFARLNLWVDKHYRDRLTTQDLADPQLIIESRTALDELTQIMKLGSVYQFQR</sequence>
<gene>
    <name evidence="1" type="primary">astB</name>
    <name type="ordered locus">Shew185_2490</name>
</gene>
<accession>A6WP88</accession>
<evidence type="ECO:0000255" key="1">
    <source>
        <dbReference type="HAMAP-Rule" id="MF_01172"/>
    </source>
</evidence>
<name>ASTB_SHEB8</name>
<organism>
    <name type="scientific">Shewanella baltica (strain OS185)</name>
    <dbReference type="NCBI Taxonomy" id="402882"/>
    <lineage>
        <taxon>Bacteria</taxon>
        <taxon>Pseudomonadati</taxon>
        <taxon>Pseudomonadota</taxon>
        <taxon>Gammaproteobacteria</taxon>
        <taxon>Alteromonadales</taxon>
        <taxon>Shewanellaceae</taxon>
        <taxon>Shewanella</taxon>
    </lineage>
</organism>
<keyword id="KW-0056">Arginine metabolism</keyword>
<keyword id="KW-0378">Hydrolase</keyword>
<dbReference type="EC" id="3.5.3.23" evidence="1"/>
<dbReference type="EMBL" id="CP000753">
    <property type="protein sequence ID" value="ABS08627.1"/>
    <property type="molecule type" value="Genomic_DNA"/>
</dbReference>
<dbReference type="RefSeq" id="WP_006086245.1">
    <property type="nucleotide sequence ID" value="NC_009665.1"/>
</dbReference>
<dbReference type="SMR" id="A6WP88"/>
<dbReference type="GeneID" id="11772705"/>
<dbReference type="KEGG" id="sbm:Shew185_2490"/>
<dbReference type="HOGENOM" id="CLU_053835_0_0_6"/>
<dbReference type="UniPathway" id="UPA00185">
    <property type="reaction ID" value="UER00280"/>
</dbReference>
<dbReference type="GO" id="GO:0009015">
    <property type="term" value="F:N-succinylarginine dihydrolase activity"/>
    <property type="evidence" value="ECO:0007669"/>
    <property type="project" value="UniProtKB-UniRule"/>
</dbReference>
<dbReference type="GO" id="GO:0019544">
    <property type="term" value="P:arginine catabolic process to glutamate"/>
    <property type="evidence" value="ECO:0007669"/>
    <property type="project" value="UniProtKB-UniRule"/>
</dbReference>
<dbReference type="GO" id="GO:0019545">
    <property type="term" value="P:arginine catabolic process to succinate"/>
    <property type="evidence" value="ECO:0007669"/>
    <property type="project" value="UniProtKB-UniRule"/>
</dbReference>
<dbReference type="FunFam" id="3.75.10.20:FF:000001">
    <property type="entry name" value="N-succinylarginine dihydrolase"/>
    <property type="match status" value="1"/>
</dbReference>
<dbReference type="Gene3D" id="3.75.10.20">
    <property type="entry name" value="Succinylarginine dihydrolase"/>
    <property type="match status" value="1"/>
</dbReference>
<dbReference type="HAMAP" id="MF_01172">
    <property type="entry name" value="AstB"/>
    <property type="match status" value="1"/>
</dbReference>
<dbReference type="InterPro" id="IPR037031">
    <property type="entry name" value="AstB_sf"/>
</dbReference>
<dbReference type="InterPro" id="IPR007079">
    <property type="entry name" value="SuccinylArg_d-Hdrlase_AstB"/>
</dbReference>
<dbReference type="NCBIfam" id="TIGR03241">
    <property type="entry name" value="arg_catab_astB"/>
    <property type="match status" value="1"/>
</dbReference>
<dbReference type="NCBIfam" id="NF009789">
    <property type="entry name" value="PRK13281.1"/>
    <property type="match status" value="1"/>
</dbReference>
<dbReference type="PANTHER" id="PTHR30420">
    <property type="entry name" value="N-SUCCINYLARGININE DIHYDROLASE"/>
    <property type="match status" value="1"/>
</dbReference>
<dbReference type="PANTHER" id="PTHR30420:SF2">
    <property type="entry name" value="N-SUCCINYLARGININE DIHYDROLASE"/>
    <property type="match status" value="1"/>
</dbReference>
<dbReference type="Pfam" id="PF04996">
    <property type="entry name" value="AstB"/>
    <property type="match status" value="1"/>
</dbReference>
<dbReference type="SUPFAM" id="SSF55909">
    <property type="entry name" value="Pentein"/>
    <property type="match status" value="1"/>
</dbReference>
<feature type="chain" id="PRO_1000065737" description="N-succinylarginine dihydrolase">
    <location>
        <begin position="1"/>
        <end position="444"/>
    </location>
</feature>
<feature type="active site" evidence="1">
    <location>
        <position position="174"/>
    </location>
</feature>
<feature type="active site" evidence="1">
    <location>
        <position position="250"/>
    </location>
</feature>
<feature type="active site" description="Nucleophile" evidence="1">
    <location>
        <position position="368"/>
    </location>
</feature>
<feature type="binding site" evidence="1">
    <location>
        <begin position="19"/>
        <end position="28"/>
    </location>
    <ligand>
        <name>substrate</name>
    </ligand>
</feature>
<feature type="binding site" evidence="1">
    <location>
        <position position="110"/>
    </location>
    <ligand>
        <name>substrate</name>
    </ligand>
</feature>
<feature type="binding site" evidence="1">
    <location>
        <begin position="137"/>
        <end position="138"/>
    </location>
    <ligand>
        <name>substrate</name>
    </ligand>
</feature>
<feature type="binding site" evidence="1">
    <location>
        <position position="214"/>
    </location>
    <ligand>
        <name>substrate</name>
    </ligand>
</feature>
<feature type="binding site" evidence="1">
    <location>
        <position position="252"/>
    </location>
    <ligand>
        <name>substrate</name>
    </ligand>
</feature>
<feature type="binding site" evidence="1">
    <location>
        <position position="362"/>
    </location>
    <ligand>
        <name>substrate</name>
    </ligand>
</feature>
<reference key="1">
    <citation type="submission" date="2007-07" db="EMBL/GenBank/DDBJ databases">
        <title>Complete sequence of chromosome of Shewanella baltica OS185.</title>
        <authorList>
            <consortium name="US DOE Joint Genome Institute"/>
            <person name="Copeland A."/>
            <person name="Lucas S."/>
            <person name="Lapidus A."/>
            <person name="Barry K."/>
            <person name="Glavina del Rio T."/>
            <person name="Dalin E."/>
            <person name="Tice H."/>
            <person name="Pitluck S."/>
            <person name="Sims D."/>
            <person name="Brettin T."/>
            <person name="Bruce D."/>
            <person name="Detter J.C."/>
            <person name="Han C."/>
            <person name="Schmutz J."/>
            <person name="Larimer F."/>
            <person name="Land M."/>
            <person name="Hauser L."/>
            <person name="Kyrpides N."/>
            <person name="Mikhailova N."/>
            <person name="Brettar I."/>
            <person name="Rodrigues J."/>
            <person name="Konstantinidis K."/>
            <person name="Tiedje J."/>
            <person name="Richardson P."/>
        </authorList>
    </citation>
    <scope>NUCLEOTIDE SEQUENCE [LARGE SCALE GENOMIC DNA]</scope>
    <source>
        <strain>OS185</strain>
    </source>
</reference>
<comment type="function">
    <text evidence="1">Catalyzes the hydrolysis of N(2)-succinylarginine into N(2)-succinylornithine, ammonia and CO(2).</text>
</comment>
<comment type="catalytic activity">
    <reaction evidence="1">
        <text>N(2)-succinyl-L-arginine + 2 H2O + 2 H(+) = N(2)-succinyl-L-ornithine + 2 NH4(+) + CO2</text>
        <dbReference type="Rhea" id="RHEA:19533"/>
        <dbReference type="ChEBI" id="CHEBI:15377"/>
        <dbReference type="ChEBI" id="CHEBI:15378"/>
        <dbReference type="ChEBI" id="CHEBI:16526"/>
        <dbReference type="ChEBI" id="CHEBI:28938"/>
        <dbReference type="ChEBI" id="CHEBI:58241"/>
        <dbReference type="ChEBI" id="CHEBI:58514"/>
        <dbReference type="EC" id="3.5.3.23"/>
    </reaction>
</comment>
<comment type="pathway">
    <text evidence="1">Amino-acid degradation; L-arginine degradation via AST pathway; L-glutamate and succinate from L-arginine: step 2/5.</text>
</comment>
<comment type="subunit">
    <text evidence="1">Homodimer.</text>
</comment>
<comment type="similarity">
    <text evidence="1">Belongs to the succinylarginine dihydrolase family.</text>
</comment>